<name>Y261_STRPM</name>
<reference key="1">
    <citation type="journal article" date="2005" name="J. Infect. Dis.">
        <title>Genome sequence of a serotype M28 strain of group A Streptococcus: potential new insights into puerperal sepsis and bacterial disease specificity.</title>
        <authorList>
            <person name="Green N.M."/>
            <person name="Zhang S."/>
            <person name="Porcella S.F."/>
            <person name="Nagiec M.J."/>
            <person name="Barbian K.D."/>
            <person name="Beres S.B."/>
            <person name="Lefebvre R.B."/>
            <person name="Musser J.M."/>
        </authorList>
    </citation>
    <scope>NUCLEOTIDE SEQUENCE [LARGE SCALE GENOMIC DNA]</scope>
    <source>
        <strain>MGAS6180</strain>
    </source>
</reference>
<comment type="subcellular location">
    <subcellularLocation>
        <location evidence="1">Cytoplasm</location>
    </subcellularLocation>
</comment>
<comment type="similarity">
    <text evidence="1">Belongs to the TACO1 family. YeeN subfamily.</text>
</comment>
<proteinExistence type="inferred from homology"/>
<evidence type="ECO:0000255" key="1">
    <source>
        <dbReference type="HAMAP-Rule" id="MF_00918"/>
    </source>
</evidence>
<gene>
    <name type="ordered locus">M28_Spy0261</name>
</gene>
<feature type="chain" id="PRO_0000257145" description="Probable transcriptional regulatory protein M28_Spy0261">
    <location>
        <begin position="1"/>
        <end position="238"/>
    </location>
</feature>
<organism>
    <name type="scientific">Streptococcus pyogenes serotype M28 (strain MGAS6180)</name>
    <dbReference type="NCBI Taxonomy" id="319701"/>
    <lineage>
        <taxon>Bacteria</taxon>
        <taxon>Bacillati</taxon>
        <taxon>Bacillota</taxon>
        <taxon>Bacilli</taxon>
        <taxon>Lactobacillales</taxon>
        <taxon>Streptococcaceae</taxon>
        <taxon>Streptococcus</taxon>
    </lineage>
</organism>
<protein>
    <recommendedName>
        <fullName evidence="1">Probable transcriptional regulatory protein M28_Spy0261</fullName>
    </recommendedName>
</protein>
<sequence length="238" mass="25888">MGRKWANIVAKKTAKDGATSKVYAKFGVEIYVAAKQGEPDPELNTALKFVIDRAKQAQVPKHVIDKAIDKAKGNTDETFVEGRYEGFGPNGSMIIVDTLTSNVNRTAANVRTAYGKNGGNMGASGSVSYLFDKKGVIVFAGDDADSVFEQLLEADVDVDDVEAEEGTITVYTAPTDLHKGIQALRDNGVEEFQVTELEMIPQSEVVLEGDDLETFEKLIDALESDDDVQKVYHNVADF</sequence>
<keyword id="KW-0963">Cytoplasm</keyword>
<keyword id="KW-0238">DNA-binding</keyword>
<keyword id="KW-0804">Transcription</keyword>
<keyword id="KW-0805">Transcription regulation</keyword>
<accession>Q48V81</accession>
<dbReference type="EMBL" id="CP000056">
    <property type="protein sequence ID" value="AAX71375.1"/>
    <property type="molecule type" value="Genomic_DNA"/>
</dbReference>
<dbReference type="RefSeq" id="WP_002985979.1">
    <property type="nucleotide sequence ID" value="NC_007296.2"/>
</dbReference>
<dbReference type="SMR" id="Q48V81"/>
<dbReference type="KEGG" id="spb:M28_Spy0261"/>
<dbReference type="HOGENOM" id="CLU_062974_2_0_9"/>
<dbReference type="GO" id="GO:0005829">
    <property type="term" value="C:cytosol"/>
    <property type="evidence" value="ECO:0007669"/>
    <property type="project" value="TreeGrafter"/>
</dbReference>
<dbReference type="GO" id="GO:0003677">
    <property type="term" value="F:DNA binding"/>
    <property type="evidence" value="ECO:0007669"/>
    <property type="project" value="UniProtKB-UniRule"/>
</dbReference>
<dbReference type="GO" id="GO:0006355">
    <property type="term" value="P:regulation of DNA-templated transcription"/>
    <property type="evidence" value="ECO:0007669"/>
    <property type="project" value="UniProtKB-UniRule"/>
</dbReference>
<dbReference type="FunFam" id="1.10.10.200:FF:000003">
    <property type="entry name" value="Probable transcriptional regulatory protein YeeN"/>
    <property type="match status" value="1"/>
</dbReference>
<dbReference type="FunFam" id="3.30.70.980:FF:000004">
    <property type="entry name" value="Probable transcriptional regulatory protein YeeN"/>
    <property type="match status" value="1"/>
</dbReference>
<dbReference type="Gene3D" id="1.10.10.200">
    <property type="match status" value="1"/>
</dbReference>
<dbReference type="Gene3D" id="3.30.70.980">
    <property type="match status" value="2"/>
</dbReference>
<dbReference type="HAMAP" id="MF_00693">
    <property type="entry name" value="Transcrip_reg_TACO1"/>
    <property type="match status" value="1"/>
</dbReference>
<dbReference type="HAMAP" id="MF_00918">
    <property type="entry name" value="Transcrip_reg_TACO1_YeeN"/>
    <property type="match status" value="1"/>
</dbReference>
<dbReference type="InterPro" id="IPR017856">
    <property type="entry name" value="Integrase-like_N"/>
</dbReference>
<dbReference type="InterPro" id="IPR048300">
    <property type="entry name" value="TACO1_YebC-like_2nd/3rd_dom"/>
</dbReference>
<dbReference type="InterPro" id="IPR049083">
    <property type="entry name" value="TACO1_YebC_N"/>
</dbReference>
<dbReference type="InterPro" id="IPR002876">
    <property type="entry name" value="Transcrip_reg_TACO1-like"/>
</dbReference>
<dbReference type="InterPro" id="IPR026564">
    <property type="entry name" value="Transcrip_reg_TACO1-like_dom3"/>
</dbReference>
<dbReference type="InterPro" id="IPR026562">
    <property type="entry name" value="Transcrip_reg_TACO1_YeeN"/>
</dbReference>
<dbReference type="InterPro" id="IPR029072">
    <property type="entry name" value="YebC-like"/>
</dbReference>
<dbReference type="NCBIfam" id="NF001030">
    <property type="entry name" value="PRK00110.1"/>
    <property type="match status" value="1"/>
</dbReference>
<dbReference type="NCBIfam" id="NF009044">
    <property type="entry name" value="PRK12378.1"/>
    <property type="match status" value="1"/>
</dbReference>
<dbReference type="NCBIfam" id="TIGR01033">
    <property type="entry name" value="YebC/PmpR family DNA-binding transcriptional regulator"/>
    <property type="match status" value="1"/>
</dbReference>
<dbReference type="PANTHER" id="PTHR12532">
    <property type="entry name" value="TRANSLATIONAL ACTIVATOR OF CYTOCHROME C OXIDASE 1"/>
    <property type="match status" value="1"/>
</dbReference>
<dbReference type="PANTHER" id="PTHR12532:SF0">
    <property type="entry name" value="TRANSLATIONAL ACTIVATOR OF CYTOCHROME C OXIDASE 1"/>
    <property type="match status" value="1"/>
</dbReference>
<dbReference type="Pfam" id="PF20772">
    <property type="entry name" value="TACO1_YebC_N"/>
    <property type="match status" value="1"/>
</dbReference>
<dbReference type="Pfam" id="PF01709">
    <property type="entry name" value="Transcrip_reg"/>
    <property type="match status" value="1"/>
</dbReference>
<dbReference type="SUPFAM" id="SSF75625">
    <property type="entry name" value="YebC-like"/>
    <property type="match status" value="1"/>
</dbReference>